<proteinExistence type="inferred from homology"/>
<feature type="signal peptide" evidence="1">
    <location>
        <begin position="1"/>
        <end position="22"/>
    </location>
</feature>
<feature type="chain" id="PRO_0000317027" description="Putative adhesin RT0816">
    <location>
        <begin position="23"/>
        <end position="225"/>
    </location>
</feature>
<accession>Q68Y05</accession>
<gene>
    <name type="ordered locus">RT0816</name>
</gene>
<reference key="1">
    <citation type="journal article" date="2004" name="J. Bacteriol.">
        <title>Complete genome sequence of Rickettsia typhi and comparison with sequences of other Rickettsiae.</title>
        <authorList>
            <person name="McLeod M.P."/>
            <person name="Qin X."/>
            <person name="Karpathy S.E."/>
            <person name="Gioia J."/>
            <person name="Highlander S.K."/>
            <person name="Fox G.E."/>
            <person name="McNeill T.Z."/>
            <person name="Jiang H."/>
            <person name="Muzny D."/>
            <person name="Jacob L.S."/>
            <person name="Hawes A.C."/>
            <person name="Sodergren E."/>
            <person name="Gill R."/>
            <person name="Hume J."/>
            <person name="Morgan M."/>
            <person name="Fan G."/>
            <person name="Amin A.G."/>
            <person name="Gibbs R.A."/>
            <person name="Hong C."/>
            <person name="Yu X.-J."/>
            <person name="Walker D.H."/>
            <person name="Weinstock G.M."/>
        </authorList>
    </citation>
    <scope>NUCLEOTIDE SEQUENCE [LARGE SCALE GENOMIC DNA]</scope>
    <source>
        <strain>ATCC VR-144 / Wilmington</strain>
    </source>
</reference>
<dbReference type="EMBL" id="AE017197">
    <property type="protein sequence ID" value="AAU04271.1"/>
    <property type="molecule type" value="Genomic_DNA"/>
</dbReference>
<dbReference type="RefSeq" id="WP_011191245.1">
    <property type="nucleotide sequence ID" value="NC_006142.1"/>
</dbReference>
<dbReference type="KEGG" id="rty:RT0816"/>
<dbReference type="eggNOG" id="COG3637">
    <property type="taxonomic scope" value="Bacteria"/>
</dbReference>
<dbReference type="HOGENOM" id="CLU_1146500_0_0_5"/>
<dbReference type="OrthoDB" id="5643626at2"/>
<dbReference type="Proteomes" id="UP000000604">
    <property type="component" value="Chromosome"/>
</dbReference>
<dbReference type="GO" id="GO:0009279">
    <property type="term" value="C:cell outer membrane"/>
    <property type="evidence" value="ECO:0007669"/>
    <property type="project" value="InterPro"/>
</dbReference>
<dbReference type="Gene3D" id="2.40.160.20">
    <property type="match status" value="1"/>
</dbReference>
<dbReference type="InterPro" id="IPR011250">
    <property type="entry name" value="OMP/PagP_b-brl"/>
</dbReference>
<dbReference type="InterPro" id="IPR000498">
    <property type="entry name" value="OmpA-like_TM_dom"/>
</dbReference>
<dbReference type="Pfam" id="PF01389">
    <property type="entry name" value="OmpA_membrane"/>
    <property type="match status" value="1"/>
</dbReference>
<dbReference type="SUPFAM" id="SSF56925">
    <property type="entry name" value="OMPA-like"/>
    <property type="match status" value="1"/>
</dbReference>
<organism>
    <name type="scientific">Rickettsia typhi (strain ATCC VR-144 / Wilmington)</name>
    <dbReference type="NCBI Taxonomy" id="257363"/>
    <lineage>
        <taxon>Bacteria</taxon>
        <taxon>Pseudomonadati</taxon>
        <taxon>Pseudomonadota</taxon>
        <taxon>Alphaproteobacteria</taxon>
        <taxon>Rickettsiales</taxon>
        <taxon>Rickettsiaceae</taxon>
        <taxon>Rickettsieae</taxon>
        <taxon>Rickettsia</taxon>
        <taxon>typhus group</taxon>
    </lineage>
</organism>
<evidence type="ECO:0000255" key="1"/>
<sequence>MKKLLLIAATSATILSSSISFAECMDNEWYLRVDAGVAMFNKEKDKTIGVKLKSNKAMPIDLGIGYYIAENVRADLTLGTTIGGKLKKSGAATNAHFTGTNVLVSHKPIVTRLLINGYVDLTSFDMFDIFVGAGVGPALVKEKISGASGLASNTTNTKNKTNVSYKLIFGTAAQVADGVKVELAYSWIDDGRTKSKHVIHEGASVQTGGMRYQSHNITVGLRFGI</sequence>
<name>Y816_RICTY</name>
<protein>
    <recommendedName>
        <fullName>Putative adhesin RT0816</fullName>
    </recommendedName>
</protein>
<keyword id="KW-0732">Signal</keyword>